<reference key="1">
    <citation type="journal article" date="2002" name="J. Bacteriol.">
        <title>Whole-genome comparison of Mycobacterium tuberculosis clinical and laboratory strains.</title>
        <authorList>
            <person name="Fleischmann R.D."/>
            <person name="Alland D."/>
            <person name="Eisen J.A."/>
            <person name="Carpenter L."/>
            <person name="White O."/>
            <person name="Peterson J.D."/>
            <person name="DeBoy R.T."/>
            <person name="Dodson R.J."/>
            <person name="Gwinn M.L."/>
            <person name="Haft D.H."/>
            <person name="Hickey E.K."/>
            <person name="Kolonay J.F."/>
            <person name="Nelson W.C."/>
            <person name="Umayam L.A."/>
            <person name="Ermolaeva M.D."/>
            <person name="Salzberg S.L."/>
            <person name="Delcher A."/>
            <person name="Utterback T.R."/>
            <person name="Weidman J.F."/>
            <person name="Khouri H.M."/>
            <person name="Gill J."/>
            <person name="Mikula A."/>
            <person name="Bishai W."/>
            <person name="Jacobs W.R. Jr."/>
            <person name="Venter J.C."/>
            <person name="Fraser C.M."/>
        </authorList>
    </citation>
    <scope>NUCLEOTIDE SEQUENCE [LARGE SCALE GENOMIC DNA]</scope>
    <source>
        <strain>CDC 1551 / Oshkosh</strain>
    </source>
</reference>
<sequence>MSGTVMQIVRVAILADSRLTEMALPAELPLREILPAVQRLVVPSAQNGDGGQADSGAAVQLSLAPVGGQPFSLDASLDTVGVVDGDLLVLQPVPAGPAAPGIVEDIADAAMIFSTSRLKPWGIAHIQRGALAAVIAVALLATGLTVTYRVATGVLAGLLAVAGIAVASALAGLLITIRSPRSGIALSIAALVPIGAALALAVPGKFGPAQVLLGAAGVAAWSLIALMIPSAERERVVAFFTAAAVVGASVALAAGAQLLWQLPLLSIGCGLIVAALLVTIQAAQLSALWARFPLPVIPAPGDPTPSAPPLRLLEDLPRRVRVSDAHQSGFIAAAVLLSVLGSVAIAVRPEALSVVGWYLVAATAAAATLRARVWDSAACKAWLLAQPYLVAGVLLVFYTATGRYVAAFGAVLVLAVLMLAWVVVALNPGIASPESYSLPLRRLLGLVAAGLDVSLIPVMAYLVGLFAWVLNR</sequence>
<feature type="chain" id="PRO_0000427087" description="ESX-3 secretion system protein EccD3">
    <location>
        <begin position="1"/>
        <end position="472"/>
    </location>
</feature>
<feature type="transmembrane region" description="Helical" evidence="3">
    <location>
        <begin position="121"/>
        <end position="141"/>
    </location>
</feature>
<feature type="transmembrane region" description="Helical" evidence="3">
    <location>
        <begin position="155"/>
        <end position="175"/>
    </location>
</feature>
<feature type="transmembrane region" description="Helical" evidence="3">
    <location>
        <begin position="183"/>
        <end position="203"/>
    </location>
</feature>
<feature type="transmembrane region" description="Helical" evidence="3">
    <location>
        <begin position="211"/>
        <end position="231"/>
    </location>
</feature>
<feature type="transmembrane region" description="Helical" evidence="3">
    <location>
        <begin position="236"/>
        <end position="256"/>
    </location>
</feature>
<feature type="transmembrane region" description="Helical" evidence="3">
    <location>
        <begin position="258"/>
        <end position="278"/>
    </location>
</feature>
<feature type="transmembrane region" description="Helical" evidence="3">
    <location>
        <begin position="327"/>
        <end position="347"/>
    </location>
</feature>
<feature type="transmembrane region" description="Helical" evidence="3">
    <location>
        <begin position="349"/>
        <end position="369"/>
    </location>
</feature>
<feature type="transmembrane region" description="Helical" evidence="3">
    <location>
        <begin position="381"/>
        <end position="401"/>
    </location>
</feature>
<feature type="transmembrane region" description="Helical" evidence="3">
    <location>
        <begin position="405"/>
        <end position="425"/>
    </location>
</feature>
<feature type="transmembrane region" description="Helical" evidence="3">
    <location>
        <begin position="450"/>
        <end position="470"/>
    </location>
</feature>
<proteinExistence type="inferred from homology"/>
<comment type="function">
    <text evidence="2">Part of the ESX-3 specialized secretion system, which is important for iron and zinc uptake or homeostasis.</text>
</comment>
<comment type="subunit">
    <text evidence="1">Part of the ESX-3 / type VII secretion system (T7SS), which is composed of cytosolic and membrane components. The ESX-3 membrane complex is composed of EccB3, EccC3, EccD3 and EccE3.</text>
</comment>
<comment type="subcellular location">
    <subcellularLocation>
        <location evidence="1">Cell inner membrane</location>
        <topology evidence="3">Multi-pass membrane protein</topology>
    </subcellularLocation>
</comment>
<comment type="similarity">
    <text evidence="4">Belongs to the EccD/Snm4 family.</text>
</comment>
<accession>P9WNQ2</accession>
<accession>L0T326</accession>
<accession>O86362</accession>
<accession>Q7DA32</accession>
<keyword id="KW-0997">Cell inner membrane</keyword>
<keyword id="KW-1003">Cell membrane</keyword>
<keyword id="KW-0472">Membrane</keyword>
<keyword id="KW-1185">Reference proteome</keyword>
<keyword id="KW-0812">Transmembrane</keyword>
<keyword id="KW-1133">Transmembrane helix</keyword>
<keyword id="KW-0813">Transport</keyword>
<protein>
    <recommendedName>
        <fullName evidence="2">ESX-3 secretion system protein EccD3</fullName>
    </recommendedName>
    <alternativeName>
        <fullName evidence="2">ESX conserved component D3</fullName>
    </alternativeName>
    <alternativeName>
        <fullName evidence="2">Type VII secretion system protein EccD3</fullName>
        <shortName evidence="2">T7SS protein EccD3</shortName>
    </alternativeName>
</protein>
<name>ECCD3_MYCTO</name>
<organism>
    <name type="scientific">Mycobacterium tuberculosis (strain CDC 1551 / Oshkosh)</name>
    <dbReference type="NCBI Taxonomy" id="83331"/>
    <lineage>
        <taxon>Bacteria</taxon>
        <taxon>Bacillati</taxon>
        <taxon>Actinomycetota</taxon>
        <taxon>Actinomycetes</taxon>
        <taxon>Mycobacteriales</taxon>
        <taxon>Mycobacteriaceae</taxon>
        <taxon>Mycobacterium</taxon>
        <taxon>Mycobacterium tuberculosis complex</taxon>
    </lineage>
</organism>
<gene>
    <name evidence="2" type="primary">eccD3</name>
    <name type="ordered locus">MT0303</name>
</gene>
<dbReference type="EMBL" id="AE000516">
    <property type="protein sequence ID" value="AAK44527.1"/>
    <property type="molecule type" value="Genomic_DNA"/>
</dbReference>
<dbReference type="PIR" id="H70836">
    <property type="entry name" value="H70836"/>
</dbReference>
<dbReference type="RefSeq" id="WP_003401524.1">
    <property type="nucleotide sequence ID" value="NZ_KK341227.1"/>
</dbReference>
<dbReference type="SMR" id="P9WNQ2"/>
<dbReference type="KEGG" id="mtc:MT0303"/>
<dbReference type="PATRIC" id="fig|83331.31.peg.326"/>
<dbReference type="HOGENOM" id="CLU_578499_0_0_11"/>
<dbReference type="Proteomes" id="UP000001020">
    <property type="component" value="Chromosome"/>
</dbReference>
<dbReference type="GO" id="GO:0005886">
    <property type="term" value="C:plasma membrane"/>
    <property type="evidence" value="ECO:0007669"/>
    <property type="project" value="UniProtKB-SubCell"/>
</dbReference>
<dbReference type="Gene3D" id="3.10.20.90">
    <property type="entry name" value="Phosphatidylinositol 3-kinase Catalytic Subunit, Chain A, domain 1"/>
    <property type="match status" value="1"/>
</dbReference>
<dbReference type="InterPro" id="IPR006707">
    <property type="entry name" value="T7SS_EccD"/>
</dbReference>
<dbReference type="InterPro" id="IPR024962">
    <property type="entry name" value="YukD-like"/>
</dbReference>
<dbReference type="NCBIfam" id="TIGR03920">
    <property type="entry name" value="T7SS_EccD"/>
    <property type="match status" value="1"/>
</dbReference>
<dbReference type="Pfam" id="PF08817">
    <property type="entry name" value="YukD"/>
    <property type="match status" value="1"/>
</dbReference>
<dbReference type="PIRSF" id="PIRSF017804">
    <property type="entry name" value="Secretion_EccD1"/>
    <property type="match status" value="1"/>
</dbReference>
<evidence type="ECO:0000250" key="1">
    <source>
        <dbReference type="UniProtKB" id="B2HSU6"/>
    </source>
</evidence>
<evidence type="ECO:0000250" key="2">
    <source>
        <dbReference type="UniProtKB" id="P9WNQ3"/>
    </source>
</evidence>
<evidence type="ECO:0000255" key="3"/>
<evidence type="ECO:0000305" key="4"/>